<dbReference type="EC" id="6.3.5.-" evidence="1"/>
<dbReference type="EMBL" id="CM000157">
    <property type="protein sequence ID" value="EDW88360.1"/>
    <property type="molecule type" value="Genomic_DNA"/>
</dbReference>
<dbReference type="SMR" id="B4P3Q9"/>
<dbReference type="EnsemblMetazoa" id="FBtr0257912">
    <property type="protein sequence ID" value="FBpp0256404"/>
    <property type="gene ID" value="FBgn0229204"/>
</dbReference>
<dbReference type="EnsemblMetazoa" id="XM_002088612.4">
    <property type="protein sequence ID" value="XP_002088648.1"/>
    <property type="gene ID" value="LOC6527558"/>
</dbReference>
<dbReference type="GeneID" id="6527558"/>
<dbReference type="KEGG" id="dya:Dyak_GE11394"/>
<dbReference type="CTD" id="283459"/>
<dbReference type="eggNOG" id="KOG4247">
    <property type="taxonomic scope" value="Eukaryota"/>
</dbReference>
<dbReference type="HOGENOM" id="CLU_105899_0_1_1"/>
<dbReference type="OMA" id="RCAKRTD"/>
<dbReference type="OrthoDB" id="5394539at2759"/>
<dbReference type="PhylomeDB" id="B4P3Q9"/>
<dbReference type="Proteomes" id="UP000002282">
    <property type="component" value="Chromosome 2L"/>
</dbReference>
<dbReference type="GO" id="GO:0030956">
    <property type="term" value="C:glutamyl-tRNA(Gln) amidotransferase complex"/>
    <property type="evidence" value="ECO:0007669"/>
    <property type="project" value="UniProtKB-UniRule"/>
</dbReference>
<dbReference type="GO" id="GO:0005739">
    <property type="term" value="C:mitochondrion"/>
    <property type="evidence" value="ECO:0007669"/>
    <property type="project" value="UniProtKB-SubCell"/>
</dbReference>
<dbReference type="GO" id="GO:0005524">
    <property type="term" value="F:ATP binding"/>
    <property type="evidence" value="ECO:0007669"/>
    <property type="project" value="UniProtKB-KW"/>
</dbReference>
<dbReference type="GO" id="GO:0050567">
    <property type="term" value="F:glutaminyl-tRNA synthase (glutamine-hydrolyzing) activity"/>
    <property type="evidence" value="ECO:0007669"/>
    <property type="project" value="UniProtKB-UniRule"/>
</dbReference>
<dbReference type="GO" id="GO:0070681">
    <property type="term" value="P:glutaminyl-tRNAGln biosynthesis via transamidation"/>
    <property type="evidence" value="ECO:0007669"/>
    <property type="project" value="UniProtKB-UniRule"/>
</dbReference>
<dbReference type="GO" id="GO:0032543">
    <property type="term" value="P:mitochondrial translation"/>
    <property type="evidence" value="ECO:0007669"/>
    <property type="project" value="UniProtKB-UniRule"/>
</dbReference>
<dbReference type="GO" id="GO:0006450">
    <property type="term" value="P:regulation of translational fidelity"/>
    <property type="evidence" value="ECO:0007669"/>
    <property type="project" value="InterPro"/>
</dbReference>
<dbReference type="HAMAP" id="MF_00122">
    <property type="entry name" value="GatC"/>
    <property type="match status" value="1"/>
</dbReference>
<dbReference type="InterPro" id="IPR036113">
    <property type="entry name" value="Asp/Glu-ADT_sf_sub_c"/>
</dbReference>
<dbReference type="InterPro" id="IPR003837">
    <property type="entry name" value="GatC"/>
</dbReference>
<dbReference type="NCBIfam" id="TIGR00135">
    <property type="entry name" value="gatC"/>
    <property type="match status" value="1"/>
</dbReference>
<dbReference type="PANTHER" id="PTHR15004">
    <property type="entry name" value="GLUTAMYL-TRNA(GLN) AMIDOTRANSFERASE SUBUNIT C, MITOCHONDRIAL"/>
    <property type="match status" value="1"/>
</dbReference>
<dbReference type="PANTHER" id="PTHR15004:SF0">
    <property type="entry name" value="GLUTAMYL-TRNA(GLN) AMIDOTRANSFERASE SUBUNIT C, MITOCHONDRIAL"/>
    <property type="match status" value="1"/>
</dbReference>
<dbReference type="Pfam" id="PF02686">
    <property type="entry name" value="GatC"/>
    <property type="match status" value="1"/>
</dbReference>
<dbReference type="SUPFAM" id="SSF141000">
    <property type="entry name" value="Glu-tRNAGln amidotransferase C subunit"/>
    <property type="match status" value="1"/>
</dbReference>
<protein>
    <recommendedName>
        <fullName evidence="1">Glutamyl-tRNA(Gln) amidotransferase subunit C, mitochondrial</fullName>
        <shortName evidence="1">Glu-AdT subunit C</shortName>
        <ecNumber evidence="1">6.3.5.-</ecNumber>
    </recommendedName>
</protein>
<organism>
    <name type="scientific">Drosophila yakuba</name>
    <name type="common">Fruit fly</name>
    <dbReference type="NCBI Taxonomy" id="7245"/>
    <lineage>
        <taxon>Eukaryota</taxon>
        <taxon>Metazoa</taxon>
        <taxon>Ecdysozoa</taxon>
        <taxon>Arthropoda</taxon>
        <taxon>Hexapoda</taxon>
        <taxon>Insecta</taxon>
        <taxon>Pterygota</taxon>
        <taxon>Neoptera</taxon>
        <taxon>Endopterygota</taxon>
        <taxon>Diptera</taxon>
        <taxon>Brachycera</taxon>
        <taxon>Muscomorpha</taxon>
        <taxon>Ephydroidea</taxon>
        <taxon>Drosophilidae</taxon>
        <taxon>Drosophila</taxon>
        <taxon>Sophophora</taxon>
    </lineage>
</organism>
<proteinExistence type="inferred from homology"/>
<feature type="chain" id="PRO_0000413311" description="Glutamyl-tRNA(Gln) amidotransferase subunit C, mitochondrial">
    <location>
        <begin position="1"/>
        <end position="148"/>
    </location>
</feature>
<gene>
    <name type="ORF">GE11394</name>
</gene>
<reference key="1">
    <citation type="journal article" date="2007" name="Nature">
        <title>Evolution of genes and genomes on the Drosophila phylogeny.</title>
        <authorList>
            <consortium name="Drosophila 12 genomes consortium"/>
        </authorList>
    </citation>
    <scope>NUCLEOTIDE SEQUENCE [LARGE SCALE GENOMIC DNA]</scope>
    <source>
        <strain>Tai18E2 / Tucson 14021-0261.01</strain>
    </source>
</reference>
<comment type="function">
    <text evidence="1">Allows the formation of correctly charged Gln-tRNA(Gln) through the transamidation of misacylated Glu-tRNA(Gln) in the mitochondria. The reaction takes place in the presence of glutamine and ATP through an activated gamma-phospho-Glu-tRNA(Gln).</text>
</comment>
<comment type="catalytic activity">
    <reaction evidence="1">
        <text>L-glutamyl-tRNA(Gln) + L-glutamine + ATP + H2O = L-glutaminyl-tRNA(Gln) + L-glutamate + ADP + phosphate + H(+)</text>
        <dbReference type="Rhea" id="RHEA:17521"/>
        <dbReference type="Rhea" id="RHEA-COMP:9681"/>
        <dbReference type="Rhea" id="RHEA-COMP:9684"/>
        <dbReference type="ChEBI" id="CHEBI:15377"/>
        <dbReference type="ChEBI" id="CHEBI:15378"/>
        <dbReference type="ChEBI" id="CHEBI:29985"/>
        <dbReference type="ChEBI" id="CHEBI:30616"/>
        <dbReference type="ChEBI" id="CHEBI:43474"/>
        <dbReference type="ChEBI" id="CHEBI:58359"/>
        <dbReference type="ChEBI" id="CHEBI:78520"/>
        <dbReference type="ChEBI" id="CHEBI:78521"/>
        <dbReference type="ChEBI" id="CHEBI:456216"/>
    </reaction>
</comment>
<comment type="subunit">
    <text evidence="1">Subunit of the heterotrimeric GatCAB amidotransferase (AdT) complex, composed of A, B and C subunits.</text>
</comment>
<comment type="subcellular location">
    <subcellularLocation>
        <location evidence="1">Mitochondrion</location>
    </subcellularLocation>
</comment>
<comment type="miscellaneous">
    <text evidence="1">This protein may be expected to contain an N-terminal transit peptide but none has been predicted.</text>
</comment>
<comment type="similarity">
    <text evidence="1">Belongs to the GatC family.</text>
</comment>
<sequence>MLRLLSKRLYCKIATKSNEKATKLDFKQLTHPTKVPQTPVDAEFPDTSSSEIQIDTKTIQLLERLSLVDLDSERALATLKSSIQFANKIAHINTEHVRPLYTVLEQQQLQLRNDQVTEGDCRAEVLRNAKVTDEDYYVSPPGNIPLEQ</sequence>
<accession>B4P3Q9</accession>
<keyword id="KW-0067">ATP-binding</keyword>
<keyword id="KW-0436">Ligase</keyword>
<keyword id="KW-0496">Mitochondrion</keyword>
<keyword id="KW-0547">Nucleotide-binding</keyword>
<keyword id="KW-0648">Protein biosynthesis</keyword>
<evidence type="ECO:0000255" key="1">
    <source>
        <dbReference type="HAMAP-Rule" id="MF_03149"/>
    </source>
</evidence>
<name>GATC_DROYA</name>